<proteinExistence type="evidence at protein level"/>
<comment type="function">
    <text evidence="3 4 5 6 7 8">Catalyzes the efflux of L-lysine (PubMed:1657604, PubMed:1935969, PubMed:27350619, PubMed:8971704). Can also export L-arginine and L-citrulline (PubMed:11429454, PubMed:27350619). The lysEG system prevents bacteriostasis due to elevated L-lysine or L-arginine concentrations that arise during growth in the presence of peptides or in mutants possessing a deregulated biosynthesis pathway (PubMed:11429454). In vitro, can also export D-lysine during biotechnological production of D-amino acids (PubMed:21257776).</text>
</comment>
<comment type="activity regulation">
    <text evidence="4">Transport process is modulated by three forces: the membrane potential, the chemical potential of lysine, and the proton gradient (PubMed:1657604). Strongly inhibited by CCCP and valinomycin (PubMed:1657604).</text>
</comment>
<comment type="subcellular location">
    <subcellularLocation>
        <location evidence="11">Cell inner membrane</location>
        <topology evidence="1">Multi-pass membrane protein</topology>
    </subcellularLocation>
    <text evidence="2">Although six hydrophobic domains were identified based on hydropathy analysis, only five transmembrane spanning helices appear to be present. The additional hydrophobic segment may dip into the membrane or be surface localized.</text>
</comment>
<comment type="induction">
    <text evidence="3">Positively regulated by LysG.</text>
</comment>
<comment type="disruption phenotype">
    <text evidence="7 8">Null mutant is unable to excrete L-lysine (PubMed:8971704). Deletion of lysEG decreases the extracellular accumulation of L-lysine, L-arginine and L-citrulline (PubMed:27350619).</text>
</comment>
<comment type="similarity">
    <text evidence="10">Belongs to the LysE/ArgO transporter (TC 2.A.75) family.</text>
</comment>
<comment type="sequence caution" evidence="10">
    <conflict type="erroneous initiation">
        <sequence resource="EMBL-CDS" id="BAB98655"/>
    </conflict>
    <text>Extended N-terminus.</text>
</comment>
<feature type="chain" id="PRO_0000204157" description="Lysine exporter LysE">
    <location>
        <begin position="1"/>
        <end position="233"/>
    </location>
</feature>
<feature type="topological domain" description="Cytoplasmic" evidence="11">
    <location>
        <begin position="1"/>
        <end position="2"/>
    </location>
</feature>
<feature type="transmembrane region" description="Helical" evidence="1">
    <location>
        <begin position="3"/>
        <end position="23"/>
    </location>
</feature>
<feature type="topological domain" description="Periplasmic" evidence="11">
    <location>
        <begin position="24"/>
        <end position="65"/>
    </location>
</feature>
<feature type="transmembrane region" description="Helical" evidence="1">
    <location>
        <begin position="66"/>
        <end position="86"/>
    </location>
</feature>
<feature type="topological domain" description="Cytoplasmic" evidence="11">
    <location>
        <begin position="87"/>
        <end position="143"/>
    </location>
</feature>
<feature type="transmembrane region" description="Helical" evidence="1">
    <location>
        <begin position="144"/>
        <end position="164"/>
    </location>
</feature>
<feature type="topological domain" description="Periplasmic" evidence="11">
    <location>
        <begin position="165"/>
        <end position="176"/>
    </location>
</feature>
<feature type="transmembrane region" description="Helical" evidence="1">
    <location>
        <begin position="177"/>
        <end position="197"/>
    </location>
</feature>
<feature type="topological domain" description="Cytoplasmic" evidence="11">
    <location>
        <begin position="198"/>
        <end position="212"/>
    </location>
</feature>
<feature type="transmembrane region" description="Helical" evidence="1">
    <location>
        <begin position="213"/>
        <end position="233"/>
    </location>
</feature>
<reference key="1">
    <citation type="journal article" date="1996" name="Mol. Microbiol.">
        <title>A new type of transporter with a new type of cellular function: L-lysine export from Corynebacterium glutamicum.</title>
        <authorList>
            <person name="Vrljic M.M."/>
            <person name="Sahm H."/>
            <person name="Eggeling L."/>
        </authorList>
    </citation>
    <scope>NUCLEOTIDE SEQUENCE [GENOMIC DNA]</scope>
    <scope>FUNCTION</scope>
    <scope>DISRUPTION PHENOTYPE</scope>
    <source>
        <strain>R127</strain>
    </source>
</reference>
<reference key="2">
    <citation type="journal article" date="2003" name="Appl. Microbiol. Biotechnol.">
        <title>The Corynebacterium glutamicum genome: features and impacts on biotechnological processes.</title>
        <authorList>
            <person name="Ikeda M."/>
            <person name="Nakagawa S."/>
        </authorList>
    </citation>
    <scope>NUCLEOTIDE SEQUENCE [LARGE SCALE GENOMIC DNA]</scope>
    <source>
        <strain>ATCC 13032 / DSM 20300 / JCM 1318 / BCRC 11384 / CCUG 27702 / LMG 3730 / NBRC 12168 / NCIMB 10025 / NRRL B-2784 / 534</strain>
    </source>
</reference>
<reference key="3">
    <citation type="journal article" date="2003" name="J. Biotechnol.">
        <title>The complete Corynebacterium glutamicum ATCC 13032 genome sequence and its impact on the production of L-aspartate-derived amino acids and vitamins.</title>
        <authorList>
            <person name="Kalinowski J."/>
            <person name="Bathe B."/>
            <person name="Bartels D."/>
            <person name="Bischoff N."/>
            <person name="Bott M."/>
            <person name="Burkovski A."/>
            <person name="Dusch N."/>
            <person name="Eggeling L."/>
            <person name="Eikmanns B.J."/>
            <person name="Gaigalat L."/>
            <person name="Goesmann A."/>
            <person name="Hartmann M."/>
            <person name="Huthmacher K."/>
            <person name="Kraemer R."/>
            <person name="Linke B."/>
            <person name="McHardy A.C."/>
            <person name="Meyer F."/>
            <person name="Moeckel B."/>
            <person name="Pfefferle W."/>
            <person name="Puehler A."/>
            <person name="Rey D.A."/>
            <person name="Rueckert C."/>
            <person name="Rupp O."/>
            <person name="Sahm H."/>
            <person name="Wendisch V.F."/>
            <person name="Wiegraebe I."/>
            <person name="Tauch A."/>
        </authorList>
    </citation>
    <scope>NUCLEOTIDE SEQUENCE [LARGE SCALE GENOMIC DNA]</scope>
    <source>
        <strain>ATCC 13032 / DSM 20300 / JCM 1318 / BCRC 11384 / CCUG 27702 / LMG 3730 / NBRC 12168 / NCIMB 10025 / NRRL B-2784 / 534</strain>
    </source>
</reference>
<reference key="4">
    <citation type="journal article" date="1991" name="Eur. J. Biochem.">
        <title>Lysine excretion by Corynebacterium glutamicum. 1. Identification of a specific secretion carrier system.</title>
        <authorList>
            <person name="Broeer S."/>
            <person name="Kraemer R."/>
        </authorList>
    </citation>
    <scope>FUNCTION</scope>
    <source>
        <strain>ATCC 13032 / DSM 20300 / JCM 1318 / BCRC 11384 / CCUG 27702 / LMG 3730 / NBRC 12168 / NCIMB 10025 / NRRL B-2784 / 534</strain>
    </source>
</reference>
<reference key="5">
    <citation type="journal article" date="1991" name="Eur. J. Biochem.">
        <title>Lysine excretion by Corynebacterium glutamicum. 2. Energetics and mechanism of the transport system.</title>
        <authorList>
            <person name="Broeer S."/>
            <person name="Kraemer R."/>
        </authorList>
    </citation>
    <scope>FUNCTION</scope>
    <scope>ACTIVITY REGULATION</scope>
</reference>
<reference key="6">
    <citation type="journal article" date="1999" name="J. Mol. Microbiol. Biotechnol.">
        <title>The LysE superfamily: topology of the lysine exporter LysE of Corynebacterium glutamicum, a paradyme for a novel superfamily of transmembrane solute translocators.</title>
        <authorList>
            <person name="Vrljic M."/>
            <person name="Garg J."/>
            <person name="Bellmann A."/>
            <person name="Wachi S."/>
            <person name="Freudl R."/>
            <person name="Malecki M.J."/>
            <person name="Sahm H."/>
            <person name="Kozina V.J."/>
            <person name="Eggeling L."/>
            <person name="Saier M.H. Jr."/>
            <person name="Eggeling L."/>
            <person name="Saier M.H. Jr."/>
        </authorList>
    </citation>
    <scope>SUBCELLULAR LOCATION</scope>
    <scope>TOPOLOGY</scope>
</reference>
<reference key="7">
    <citation type="journal article" date="2001" name="Microbiology">
        <title>Expression control and specificity of the basic amino acid exporter LysE of Corynebacterium glutamicum.</title>
        <authorList>
            <person name="Bellmann A."/>
            <person name="Vrljic M."/>
            <person name="Patek M."/>
            <person name="Sahm H."/>
            <person name="Kraemer R."/>
            <person name="Eggeling L."/>
        </authorList>
    </citation>
    <scope>FUNCTION</scope>
    <scope>INDUCTION</scope>
    <source>
        <strain>ATCC 13032 / DSM 20300 / JCM 1318 / BCRC 11384 / CCUG 27702 / LMG 3730 / NBRC 12168 / NCIMB 10025 / NRRL B-2784 / 534</strain>
    </source>
</reference>
<reference key="8">
    <citation type="journal article" date="2011" name="J. Bacteriol.">
        <title>Corynebacterium glutamicum as a host for synthesis and export of D-Amino Acids.</title>
        <authorList>
            <person name="Staebler N."/>
            <person name="Oikawa T."/>
            <person name="Bott M."/>
            <person name="Eggeling L."/>
        </authorList>
    </citation>
    <scope>FUNCTION IN D-LYSINE EXPORT</scope>
    <source>
        <strain>ATCC 13032 / DSM 20300 / JCM 1318 / BCRC 11384 / CCUG 27702 / LMG 3730 / NBRC 12168 / NCIMB 10025 / NRRL B-2784 / 534</strain>
    </source>
</reference>
<reference key="9">
    <citation type="journal article" date="2016" name="Appl. Microbiol. Biotechnol.">
        <title>Roles of export genes cgmA and lysE for the production of L-arginine and L-citrulline by Corynebacterium glutamicum.</title>
        <authorList>
            <person name="Lubitz D."/>
            <person name="Jorge J.M."/>
            <person name="Perez-Garcia F."/>
            <person name="Taniguchi H."/>
            <person name="Wendisch V.F."/>
        </authorList>
    </citation>
    <scope>FUNCTION</scope>
    <scope>DISRUPTION PHENOTYPE</scope>
    <source>
        <strain>ATCC 13032 / DSM 20300 / JCM 1318 / BCRC 11384 / CCUG 27702 / LMG 3730 / NBRC 12168 / NCIMB 10025 / NRRL B-2784 / 534</strain>
    </source>
</reference>
<evidence type="ECO:0000255" key="1"/>
<evidence type="ECO:0000269" key="2">
    <source>
    </source>
</evidence>
<evidence type="ECO:0000269" key="3">
    <source>
    </source>
</evidence>
<evidence type="ECO:0000269" key="4">
    <source>
    </source>
</evidence>
<evidence type="ECO:0000269" key="5">
    <source>
    </source>
</evidence>
<evidence type="ECO:0000269" key="6">
    <source>
    </source>
</evidence>
<evidence type="ECO:0000269" key="7">
    <source>
    </source>
</evidence>
<evidence type="ECO:0000269" key="8">
    <source>
    </source>
</evidence>
<evidence type="ECO:0000303" key="9">
    <source>
    </source>
</evidence>
<evidence type="ECO:0000305" key="10"/>
<evidence type="ECO:0000305" key="11">
    <source>
    </source>
</evidence>
<dbReference type="EMBL" id="X96471">
    <property type="protein sequence ID" value="CAA65324.2"/>
    <property type="molecule type" value="Genomic_DNA"/>
</dbReference>
<dbReference type="EMBL" id="BA000036">
    <property type="protein sequence ID" value="BAB98655.1"/>
    <property type="status" value="ALT_INIT"/>
    <property type="molecule type" value="Genomic_DNA"/>
</dbReference>
<dbReference type="EMBL" id="BX927151">
    <property type="protein sequence ID" value="CAF19965.1"/>
    <property type="molecule type" value="Genomic_DNA"/>
</dbReference>
<dbReference type="RefSeq" id="NP_600485.1">
    <property type="nucleotide sequence ID" value="NC_003450.3"/>
</dbReference>
<dbReference type="SMR" id="P94633"/>
<dbReference type="STRING" id="196627.cg1424"/>
<dbReference type="TCDB" id="2.A.75.1.1">
    <property type="family name" value="the l-lysine exporter (lyse) family"/>
</dbReference>
<dbReference type="KEGG" id="cgb:cg1424"/>
<dbReference type="KEGG" id="cgl:Cgl1262"/>
<dbReference type="PATRIC" id="fig|196627.13.peg.1239"/>
<dbReference type="eggNOG" id="COG1279">
    <property type="taxonomic scope" value="Bacteria"/>
</dbReference>
<dbReference type="HOGENOM" id="CLU_087840_0_0_11"/>
<dbReference type="OrthoDB" id="5638726at2"/>
<dbReference type="BioCyc" id="CORYNE:G18NG-10835-MONOMER"/>
<dbReference type="Proteomes" id="UP000000582">
    <property type="component" value="Chromosome"/>
</dbReference>
<dbReference type="Proteomes" id="UP000001009">
    <property type="component" value="Chromosome"/>
</dbReference>
<dbReference type="GO" id="GO:0005886">
    <property type="term" value="C:plasma membrane"/>
    <property type="evidence" value="ECO:0007669"/>
    <property type="project" value="UniProtKB-SubCell"/>
</dbReference>
<dbReference type="GO" id="GO:0015171">
    <property type="term" value="F:amino acid transmembrane transporter activity"/>
    <property type="evidence" value="ECO:0007669"/>
    <property type="project" value="TreeGrafter"/>
</dbReference>
<dbReference type="InterPro" id="IPR001123">
    <property type="entry name" value="LeuE-type"/>
</dbReference>
<dbReference type="InterPro" id="IPR004777">
    <property type="entry name" value="Lys/arg_exporter"/>
</dbReference>
<dbReference type="NCBIfam" id="TIGR00948">
    <property type="entry name" value="2a75"/>
    <property type="match status" value="1"/>
</dbReference>
<dbReference type="PANTHER" id="PTHR30086">
    <property type="entry name" value="ARGININE EXPORTER PROTEIN ARGO"/>
    <property type="match status" value="1"/>
</dbReference>
<dbReference type="PANTHER" id="PTHR30086:SF20">
    <property type="entry name" value="ARGININE EXPORTER PROTEIN ARGO-RELATED"/>
    <property type="match status" value="1"/>
</dbReference>
<dbReference type="Pfam" id="PF01810">
    <property type="entry name" value="LysE"/>
    <property type="match status" value="1"/>
</dbReference>
<accession>P94633</accession>
<organism>
    <name type="scientific">Corynebacterium glutamicum (strain ATCC 13032 / DSM 20300 / JCM 1318 / BCRC 11384 / CCUG 27702 / LMG 3730 / NBRC 12168 / NCIMB 10025 / NRRL B-2784 / 534)</name>
    <dbReference type="NCBI Taxonomy" id="196627"/>
    <lineage>
        <taxon>Bacteria</taxon>
        <taxon>Bacillati</taxon>
        <taxon>Actinomycetota</taxon>
        <taxon>Actinomycetes</taxon>
        <taxon>Mycobacteriales</taxon>
        <taxon>Corynebacteriaceae</taxon>
        <taxon>Corynebacterium</taxon>
    </lineage>
</organism>
<keyword id="KW-0029">Amino-acid transport</keyword>
<keyword id="KW-0997">Cell inner membrane</keyword>
<keyword id="KW-1003">Cell membrane</keyword>
<keyword id="KW-0472">Membrane</keyword>
<keyword id="KW-1185">Reference proteome</keyword>
<keyword id="KW-0812">Transmembrane</keyword>
<keyword id="KW-1133">Transmembrane helix</keyword>
<keyword id="KW-0813">Transport</keyword>
<gene>
    <name evidence="9" type="primary">lysE</name>
    <name type="ordered locus">Cgl1262</name>
    <name type="ordered locus">cg1424</name>
</gene>
<sequence length="233" mass="25082">MEIFITGLLLGASLLLSIGPQNVLVIKQGIKREGLIAVLLVCLISDVFLFIAGTLGVDLLSNAAPIVLDIMRWGGIAYLLWFAVMAAKDAMTNKVEAPQIIEETEPTVPDDTPLGGSAVATDTRNRVRVEVSVDKQRVWVKPMLMAIVLTWLNPNAYLDAFVFIGGVGAQYGDTGRWIFAAGAFAASLIWFPLVGFGAAALSRPLSSPKVWRWINVVVAVVMTALAIKLMLMG</sequence>
<name>LYSE_CORGL</name>
<protein>
    <recommendedName>
        <fullName evidence="10">Lysine exporter LysE</fullName>
    </recommendedName>
</protein>